<comment type="function">
    <text evidence="1">Involved in the catabolism of oxalate and in the adapatation to low pH via the induction of the oxalate-dependent acid tolerance response (ATR). Catalyzes the transfer of the CoA moiety from formyl-CoA to oxalate (By similarity).</text>
</comment>
<comment type="catalytic activity">
    <reaction evidence="2">
        <text>formyl-CoA + oxalate = oxalyl-CoA + formate</text>
        <dbReference type="Rhea" id="RHEA:16545"/>
        <dbReference type="ChEBI" id="CHEBI:15740"/>
        <dbReference type="ChEBI" id="CHEBI:30623"/>
        <dbReference type="ChEBI" id="CHEBI:57376"/>
        <dbReference type="ChEBI" id="CHEBI:57388"/>
        <dbReference type="EC" id="2.8.3.16"/>
    </reaction>
</comment>
<comment type="pathway">
    <text evidence="2">Metabolic intermediate degradation; oxalate degradation; CO(2) and formate from oxalate: step 1/2.</text>
</comment>
<comment type="subunit">
    <text evidence="2">Homodimer.</text>
</comment>
<comment type="similarity">
    <text evidence="2">Belongs to the CoA-transferase III family. Frc subfamily.</text>
</comment>
<comment type="sequence caution" evidence="3">
    <conflict type="erroneous initiation">
        <sequence resource="EMBL-CDS" id="CAE27386"/>
    </conflict>
    <text>Extended N-terminus.</text>
</comment>
<proteinExistence type="inferred from homology"/>
<gene>
    <name evidence="2" type="primary">frc</name>
    <name type="ordered locus">RPA1945</name>
</gene>
<dbReference type="EC" id="2.8.3.16" evidence="2"/>
<dbReference type="EMBL" id="BX572599">
    <property type="protein sequence ID" value="CAE27386.1"/>
    <property type="status" value="ALT_INIT"/>
    <property type="molecule type" value="Genomic_DNA"/>
</dbReference>
<dbReference type="RefSeq" id="WP_042440972.1">
    <property type="nucleotide sequence ID" value="NZ_CP116810.1"/>
</dbReference>
<dbReference type="SMR" id="Q6N8F8"/>
<dbReference type="STRING" id="258594.RPA1945"/>
<dbReference type="GeneID" id="66892988"/>
<dbReference type="eggNOG" id="COG1804">
    <property type="taxonomic scope" value="Bacteria"/>
</dbReference>
<dbReference type="HOGENOM" id="CLU_033975_2_1_5"/>
<dbReference type="PhylomeDB" id="Q6N8F8"/>
<dbReference type="BRENDA" id="2.8.3.16">
    <property type="organism ID" value="5412"/>
</dbReference>
<dbReference type="UniPathway" id="UPA00540">
    <property type="reaction ID" value="UER00598"/>
</dbReference>
<dbReference type="GO" id="GO:0033608">
    <property type="term" value="F:formyl-CoA transferase activity"/>
    <property type="evidence" value="ECO:0007669"/>
    <property type="project" value="UniProtKB-EC"/>
</dbReference>
<dbReference type="GO" id="GO:0033611">
    <property type="term" value="P:oxalate catabolic process"/>
    <property type="evidence" value="ECO:0007669"/>
    <property type="project" value="UniProtKB-UniRule"/>
</dbReference>
<dbReference type="Gene3D" id="3.40.50.10540">
    <property type="entry name" value="Crotonobetainyl-coa:carnitine coa-transferase, domain 1"/>
    <property type="match status" value="1"/>
</dbReference>
<dbReference type="Gene3D" id="3.30.1540.10">
    <property type="entry name" value="formyl-coa transferase, domain 3"/>
    <property type="match status" value="1"/>
</dbReference>
<dbReference type="HAMAP" id="MF_00742">
    <property type="entry name" value="Formyl_CoA_transfer"/>
    <property type="match status" value="1"/>
</dbReference>
<dbReference type="InterPro" id="IPR050483">
    <property type="entry name" value="CoA-transferase_III_domain"/>
</dbReference>
<dbReference type="InterPro" id="IPR003673">
    <property type="entry name" value="CoA-Trfase_fam_III"/>
</dbReference>
<dbReference type="InterPro" id="IPR044855">
    <property type="entry name" value="CoA-Trfase_III_dom3_sf"/>
</dbReference>
<dbReference type="InterPro" id="IPR023606">
    <property type="entry name" value="CoA-Trfase_III_dom_1_sf"/>
</dbReference>
<dbReference type="InterPro" id="IPR017659">
    <property type="entry name" value="Formyl_CoA_transfer"/>
</dbReference>
<dbReference type="NCBIfam" id="TIGR03253">
    <property type="entry name" value="oxalate_frc"/>
    <property type="match status" value="1"/>
</dbReference>
<dbReference type="NCBIfam" id="NF003809">
    <property type="entry name" value="PRK05398.1"/>
    <property type="match status" value="1"/>
</dbReference>
<dbReference type="PANTHER" id="PTHR48207">
    <property type="entry name" value="SUCCINATE--HYDROXYMETHYLGLUTARATE COA-TRANSFERASE"/>
    <property type="match status" value="1"/>
</dbReference>
<dbReference type="PANTHER" id="PTHR48207:SF3">
    <property type="entry name" value="SUCCINATE--HYDROXYMETHYLGLUTARATE COA-TRANSFERASE"/>
    <property type="match status" value="1"/>
</dbReference>
<dbReference type="Pfam" id="PF02515">
    <property type="entry name" value="CoA_transf_3"/>
    <property type="match status" value="1"/>
</dbReference>
<dbReference type="SUPFAM" id="SSF89796">
    <property type="entry name" value="CoA-transferase family III (CaiB/BaiF)"/>
    <property type="match status" value="1"/>
</dbReference>
<accession>Q6N8F8</accession>
<keyword id="KW-0808">Transferase</keyword>
<name>FCTA_RHOPA</name>
<sequence length="425" mass="46482">MTKALDGVRVLDFTHVQSGPTCTQLLAWFGADVIKVERPGSGDITRGQLQDIPKVDSLYFTMLNHNKRSITLDTKNPKGKEVLTALIRTCDVLVENFGPGVLDRMGFTWEKIQEINPRMIVASIKGFGPGPYEDCKVYENVAQCTGGAASTTGFREGLPLVTGAQIGDSGTGLHLALGIVTALYQRHHTGRGQRVTAAMQDGVLNLCRVKLRDQQRLDHGPLKEYSQFGEGIPFGDAVPRAGNDSGGGQPGRILKCKGWEQDPNAYIYVITQAPVWEKICDVIGETGWKTHPDYATPPARLSRLNEIFARIEQWTMTKTKFEAMEILNADDIPCGPILSMKELAEDQSLRATGTIVEVDHPTRGKYLSVGNPIKLSDSPTEVKRSPLLGEHTDEILRDVLGYSDAHVAEIHDSGATAPPRKQAAE</sequence>
<feature type="chain" id="PRO_0000194722" description="Formyl-CoA:oxalate CoA-transferase">
    <location>
        <begin position="1"/>
        <end position="425"/>
    </location>
</feature>
<feature type="active site" description="Nucleophile" evidence="2">
    <location>
        <position position="168"/>
    </location>
</feature>
<feature type="binding site" evidence="1">
    <location>
        <begin position="17"/>
        <end position="18"/>
    </location>
    <ligand>
        <name>CoA</name>
        <dbReference type="ChEBI" id="CHEBI:57287"/>
    </ligand>
</feature>
<feature type="binding site" evidence="2">
    <location>
        <position position="38"/>
    </location>
    <ligand>
        <name>CoA</name>
        <dbReference type="ChEBI" id="CHEBI:57287"/>
    </ligand>
</feature>
<feature type="binding site" evidence="1">
    <location>
        <begin position="72"/>
        <end position="75"/>
    </location>
    <ligand>
        <name>CoA</name>
        <dbReference type="ChEBI" id="CHEBI:57287"/>
    </ligand>
</feature>
<feature type="binding site" evidence="1">
    <location>
        <begin position="96"/>
        <end position="98"/>
    </location>
    <ligand>
        <name>CoA</name>
        <dbReference type="ChEBI" id="CHEBI:57287"/>
    </ligand>
</feature>
<feature type="binding site" evidence="2">
    <location>
        <position position="104"/>
    </location>
    <ligand>
        <name>CoA</name>
        <dbReference type="ChEBI" id="CHEBI:57287"/>
    </ligand>
</feature>
<feature type="binding site" evidence="1">
    <location>
        <begin position="136"/>
        <end position="139"/>
    </location>
    <ligand>
        <name>CoA</name>
        <dbReference type="ChEBI" id="CHEBI:57287"/>
    </ligand>
</feature>
<feature type="binding site" evidence="1">
    <location>
        <begin position="247"/>
        <end position="249"/>
    </location>
    <ligand>
        <name>substrate</name>
    </ligand>
</feature>
<protein>
    <recommendedName>
        <fullName>Formyl-CoA:oxalate CoA-transferase</fullName>
        <shortName>FCOCT</shortName>
        <ecNumber evidence="2">2.8.3.16</ecNumber>
    </recommendedName>
    <alternativeName>
        <fullName evidence="2">Formyl-coenzyme A transferase</fullName>
        <shortName evidence="2">Formyl-CoA transferase</shortName>
    </alternativeName>
</protein>
<reference key="1">
    <citation type="journal article" date="2004" name="Nat. Biotechnol.">
        <title>Complete genome sequence of the metabolically versatile photosynthetic bacterium Rhodopseudomonas palustris.</title>
        <authorList>
            <person name="Larimer F.W."/>
            <person name="Chain P."/>
            <person name="Hauser L."/>
            <person name="Lamerdin J.E."/>
            <person name="Malfatti S."/>
            <person name="Do L."/>
            <person name="Land M.L."/>
            <person name="Pelletier D.A."/>
            <person name="Beatty J.T."/>
            <person name="Lang A.S."/>
            <person name="Tabita F.R."/>
            <person name="Gibson J.L."/>
            <person name="Hanson T.E."/>
            <person name="Bobst C."/>
            <person name="Torres y Torres J.L."/>
            <person name="Peres C."/>
            <person name="Harrison F.H."/>
            <person name="Gibson J."/>
            <person name="Harwood C.S."/>
        </authorList>
    </citation>
    <scope>NUCLEOTIDE SEQUENCE [LARGE SCALE GENOMIC DNA]</scope>
    <source>
        <strain>ATCC BAA-98 / CGA009</strain>
    </source>
</reference>
<organism>
    <name type="scientific">Rhodopseudomonas palustris (strain ATCC BAA-98 / CGA009)</name>
    <dbReference type="NCBI Taxonomy" id="258594"/>
    <lineage>
        <taxon>Bacteria</taxon>
        <taxon>Pseudomonadati</taxon>
        <taxon>Pseudomonadota</taxon>
        <taxon>Alphaproteobacteria</taxon>
        <taxon>Hyphomicrobiales</taxon>
        <taxon>Nitrobacteraceae</taxon>
        <taxon>Rhodopseudomonas</taxon>
    </lineage>
</organism>
<evidence type="ECO:0000250" key="1"/>
<evidence type="ECO:0000255" key="2">
    <source>
        <dbReference type="HAMAP-Rule" id="MF_00742"/>
    </source>
</evidence>
<evidence type="ECO:0000305" key="3"/>